<protein>
    <recommendedName>
        <fullName evidence="1">Bifunctional protein GlmU</fullName>
    </recommendedName>
    <domain>
        <recommendedName>
            <fullName evidence="1">UDP-N-acetylglucosamine pyrophosphorylase</fullName>
            <ecNumber evidence="1">2.7.7.23</ecNumber>
        </recommendedName>
        <alternativeName>
            <fullName evidence="1">N-acetylglucosamine-1-phosphate uridyltransferase</fullName>
        </alternativeName>
    </domain>
    <domain>
        <recommendedName>
            <fullName evidence="1">Glucosamine-1-phosphate N-acetyltransferase</fullName>
            <ecNumber evidence="1">2.3.1.157</ecNumber>
        </recommendedName>
    </domain>
</protein>
<dbReference type="EC" id="2.7.7.23" evidence="1"/>
<dbReference type="EC" id="2.3.1.157" evidence="1"/>
<dbReference type="EMBL" id="AE017283">
    <property type="protein sequence ID" value="AAT82283.1"/>
    <property type="status" value="ALT_INIT"/>
    <property type="molecule type" value="Genomic_DNA"/>
</dbReference>
<dbReference type="SMR" id="Q6AAD3"/>
<dbReference type="EnsemblBacteria" id="AAT82283">
    <property type="protein sequence ID" value="AAT82283"/>
    <property type="gene ID" value="PPA0530"/>
</dbReference>
<dbReference type="KEGG" id="pac:PPA0530"/>
<dbReference type="eggNOG" id="COG1207">
    <property type="taxonomic scope" value="Bacteria"/>
</dbReference>
<dbReference type="HOGENOM" id="CLU_029499_15_2_11"/>
<dbReference type="UniPathway" id="UPA00113">
    <property type="reaction ID" value="UER00532"/>
</dbReference>
<dbReference type="UniPathway" id="UPA00113">
    <property type="reaction ID" value="UER00533"/>
</dbReference>
<dbReference type="UniPathway" id="UPA00973"/>
<dbReference type="Proteomes" id="UP000000603">
    <property type="component" value="Chromosome"/>
</dbReference>
<dbReference type="GO" id="GO:0005737">
    <property type="term" value="C:cytoplasm"/>
    <property type="evidence" value="ECO:0007669"/>
    <property type="project" value="UniProtKB-SubCell"/>
</dbReference>
<dbReference type="GO" id="GO:0016020">
    <property type="term" value="C:membrane"/>
    <property type="evidence" value="ECO:0007669"/>
    <property type="project" value="GOC"/>
</dbReference>
<dbReference type="GO" id="GO:0019134">
    <property type="term" value="F:glucosamine-1-phosphate N-acetyltransferase activity"/>
    <property type="evidence" value="ECO:0007669"/>
    <property type="project" value="UniProtKB-UniRule"/>
</dbReference>
<dbReference type="GO" id="GO:0000287">
    <property type="term" value="F:magnesium ion binding"/>
    <property type="evidence" value="ECO:0007669"/>
    <property type="project" value="UniProtKB-UniRule"/>
</dbReference>
<dbReference type="GO" id="GO:0003977">
    <property type="term" value="F:UDP-N-acetylglucosamine diphosphorylase activity"/>
    <property type="evidence" value="ECO:0007669"/>
    <property type="project" value="UniProtKB-UniRule"/>
</dbReference>
<dbReference type="GO" id="GO:0000902">
    <property type="term" value="P:cell morphogenesis"/>
    <property type="evidence" value="ECO:0007669"/>
    <property type="project" value="UniProtKB-UniRule"/>
</dbReference>
<dbReference type="GO" id="GO:0071555">
    <property type="term" value="P:cell wall organization"/>
    <property type="evidence" value="ECO:0007669"/>
    <property type="project" value="UniProtKB-KW"/>
</dbReference>
<dbReference type="GO" id="GO:0009245">
    <property type="term" value="P:lipid A biosynthetic process"/>
    <property type="evidence" value="ECO:0007669"/>
    <property type="project" value="UniProtKB-UniRule"/>
</dbReference>
<dbReference type="GO" id="GO:0009252">
    <property type="term" value="P:peptidoglycan biosynthetic process"/>
    <property type="evidence" value="ECO:0007669"/>
    <property type="project" value="UniProtKB-UniRule"/>
</dbReference>
<dbReference type="GO" id="GO:0008360">
    <property type="term" value="P:regulation of cell shape"/>
    <property type="evidence" value="ECO:0007669"/>
    <property type="project" value="UniProtKB-KW"/>
</dbReference>
<dbReference type="GO" id="GO:0006048">
    <property type="term" value="P:UDP-N-acetylglucosamine biosynthetic process"/>
    <property type="evidence" value="ECO:0007669"/>
    <property type="project" value="UniProtKB-UniPathway"/>
</dbReference>
<dbReference type="CDD" id="cd02540">
    <property type="entry name" value="GT2_GlmU_N_bac"/>
    <property type="match status" value="1"/>
</dbReference>
<dbReference type="Gene3D" id="2.160.10.10">
    <property type="entry name" value="Hexapeptide repeat proteins"/>
    <property type="match status" value="1"/>
</dbReference>
<dbReference type="Gene3D" id="3.90.550.10">
    <property type="entry name" value="Spore Coat Polysaccharide Biosynthesis Protein SpsA, Chain A"/>
    <property type="match status" value="1"/>
</dbReference>
<dbReference type="HAMAP" id="MF_01631">
    <property type="entry name" value="GlmU"/>
    <property type="match status" value="1"/>
</dbReference>
<dbReference type="InterPro" id="IPR005882">
    <property type="entry name" value="Bifunctional_GlmU"/>
</dbReference>
<dbReference type="InterPro" id="IPR050065">
    <property type="entry name" value="GlmU-like"/>
</dbReference>
<dbReference type="InterPro" id="IPR025877">
    <property type="entry name" value="MobA-like_NTP_Trfase"/>
</dbReference>
<dbReference type="InterPro" id="IPR029044">
    <property type="entry name" value="Nucleotide-diphossugar_trans"/>
</dbReference>
<dbReference type="InterPro" id="IPR011004">
    <property type="entry name" value="Trimer_LpxA-like_sf"/>
</dbReference>
<dbReference type="NCBIfam" id="TIGR01173">
    <property type="entry name" value="glmU"/>
    <property type="match status" value="1"/>
</dbReference>
<dbReference type="PANTHER" id="PTHR43584:SF3">
    <property type="entry name" value="BIFUNCTIONAL PROTEIN GLMU"/>
    <property type="match status" value="1"/>
</dbReference>
<dbReference type="PANTHER" id="PTHR43584">
    <property type="entry name" value="NUCLEOTIDYL TRANSFERASE"/>
    <property type="match status" value="1"/>
</dbReference>
<dbReference type="Pfam" id="PF12804">
    <property type="entry name" value="NTP_transf_3"/>
    <property type="match status" value="1"/>
</dbReference>
<dbReference type="SUPFAM" id="SSF53448">
    <property type="entry name" value="Nucleotide-diphospho-sugar transferases"/>
    <property type="match status" value="1"/>
</dbReference>
<dbReference type="SUPFAM" id="SSF51161">
    <property type="entry name" value="Trimeric LpxA-like enzymes"/>
    <property type="match status" value="1"/>
</dbReference>
<keyword id="KW-0012">Acyltransferase</keyword>
<keyword id="KW-0133">Cell shape</keyword>
<keyword id="KW-0961">Cell wall biogenesis/degradation</keyword>
<keyword id="KW-0963">Cytoplasm</keyword>
<keyword id="KW-0460">Magnesium</keyword>
<keyword id="KW-0479">Metal-binding</keyword>
<keyword id="KW-0511">Multifunctional enzyme</keyword>
<keyword id="KW-0548">Nucleotidyltransferase</keyword>
<keyword id="KW-0573">Peptidoglycan synthesis</keyword>
<keyword id="KW-0677">Repeat</keyword>
<keyword id="KW-0808">Transferase</keyword>
<name>GLMU_CUTAK</name>
<accession>Q6AAD3</accession>
<feature type="chain" id="PRO_0000233819" description="Bifunctional protein GlmU">
    <location>
        <begin position="1"/>
        <end position="418"/>
    </location>
</feature>
<feature type="region of interest" description="Pyrophosphorylase" evidence="1">
    <location>
        <begin position="1"/>
        <end position="236"/>
    </location>
</feature>
<feature type="region of interest" description="Linker" evidence="1">
    <location>
        <begin position="237"/>
        <end position="257"/>
    </location>
</feature>
<feature type="region of interest" description="N-acetyltransferase" evidence="1">
    <location>
        <begin position="258"/>
        <end position="418"/>
    </location>
</feature>
<feature type="active site" description="Proton acceptor" evidence="1">
    <location>
        <position position="369"/>
    </location>
</feature>
<feature type="binding site" evidence="1">
    <location>
        <begin position="7"/>
        <end position="10"/>
    </location>
    <ligand>
        <name>UDP-N-acetyl-alpha-D-glucosamine</name>
        <dbReference type="ChEBI" id="CHEBI:57705"/>
    </ligand>
</feature>
<feature type="binding site" evidence="1">
    <location>
        <position position="21"/>
    </location>
    <ligand>
        <name>UDP-N-acetyl-alpha-D-glucosamine</name>
        <dbReference type="ChEBI" id="CHEBI:57705"/>
    </ligand>
</feature>
<feature type="binding site" evidence="1">
    <location>
        <position position="74"/>
    </location>
    <ligand>
        <name>UDP-N-acetyl-alpha-D-glucosamine</name>
        <dbReference type="ChEBI" id="CHEBI:57705"/>
    </ligand>
</feature>
<feature type="binding site" evidence="1">
    <location>
        <begin position="79"/>
        <end position="80"/>
    </location>
    <ligand>
        <name>UDP-N-acetyl-alpha-D-glucosamine</name>
        <dbReference type="ChEBI" id="CHEBI:57705"/>
    </ligand>
</feature>
<feature type="binding site" evidence="1">
    <location>
        <begin position="102"/>
        <end position="104"/>
    </location>
    <ligand>
        <name>UDP-N-acetyl-alpha-D-glucosamine</name>
        <dbReference type="ChEBI" id="CHEBI:57705"/>
    </ligand>
</feature>
<feature type="binding site" evidence="1">
    <location>
        <position position="104"/>
    </location>
    <ligand>
        <name>Mg(2+)</name>
        <dbReference type="ChEBI" id="CHEBI:18420"/>
    </ligand>
</feature>
<feature type="binding site" evidence="1">
    <location>
        <position position="141"/>
    </location>
    <ligand>
        <name>UDP-N-acetyl-alpha-D-glucosamine</name>
        <dbReference type="ChEBI" id="CHEBI:57705"/>
    </ligand>
</feature>
<feature type="binding site" evidence="1">
    <location>
        <position position="155"/>
    </location>
    <ligand>
        <name>UDP-N-acetyl-alpha-D-glucosamine</name>
        <dbReference type="ChEBI" id="CHEBI:57705"/>
    </ligand>
</feature>
<feature type="binding site" evidence="1">
    <location>
        <position position="170"/>
    </location>
    <ligand>
        <name>UDP-N-acetyl-alpha-D-glucosamine</name>
        <dbReference type="ChEBI" id="CHEBI:57705"/>
    </ligand>
</feature>
<feature type="binding site" evidence="1">
    <location>
        <position position="234"/>
    </location>
    <ligand>
        <name>Mg(2+)</name>
        <dbReference type="ChEBI" id="CHEBI:18420"/>
    </ligand>
</feature>
<feature type="binding site" evidence="1">
    <location>
        <position position="234"/>
    </location>
    <ligand>
        <name>UDP-N-acetyl-alpha-D-glucosamine</name>
        <dbReference type="ChEBI" id="CHEBI:57705"/>
    </ligand>
</feature>
<feature type="binding site" evidence="1">
    <location>
        <position position="339"/>
    </location>
    <ligand>
        <name>UDP-N-acetyl-alpha-D-glucosamine</name>
        <dbReference type="ChEBI" id="CHEBI:57705"/>
    </ligand>
</feature>
<feature type="binding site" evidence="1">
    <location>
        <position position="357"/>
    </location>
    <ligand>
        <name>UDP-N-acetyl-alpha-D-glucosamine</name>
        <dbReference type="ChEBI" id="CHEBI:57705"/>
    </ligand>
</feature>
<feature type="binding site" evidence="1">
    <location>
        <position position="372"/>
    </location>
    <ligand>
        <name>UDP-N-acetyl-alpha-D-glucosamine</name>
        <dbReference type="ChEBI" id="CHEBI:57705"/>
    </ligand>
</feature>
<feature type="binding site" evidence="1">
    <location>
        <position position="386"/>
    </location>
    <ligand>
        <name>acetyl-CoA</name>
        <dbReference type="ChEBI" id="CHEBI:57288"/>
    </ligand>
</feature>
<organism>
    <name type="scientific">Cutibacterium acnes (strain DSM 16379 / KPA171202)</name>
    <name type="common">Propionibacterium acnes</name>
    <dbReference type="NCBI Taxonomy" id="267747"/>
    <lineage>
        <taxon>Bacteria</taxon>
        <taxon>Bacillati</taxon>
        <taxon>Actinomycetota</taxon>
        <taxon>Actinomycetes</taxon>
        <taxon>Propionibacteriales</taxon>
        <taxon>Propionibacteriaceae</taxon>
        <taxon>Cutibacterium</taxon>
    </lineage>
</organism>
<sequence>MAAVIVLAAGGGTRMKSTKSKLLHEVAGRPMLSWAIGAARGLNPEHLVVVVGHRREQVEAHLAEDAPDVTTAVQAEQKGTGHAVACGLEGLDELHGEVVVTYGDVPMLTGETLQRMVEVHRERRNLVTVLTAEVEDPTGYGRILRGGEAVVGIVEHKDADEAQRAVREINSGIYVFDAEALREGVSKLSNDNVQGEYYLTDVVTMAADGTVEVPGRGRVGAFRIDDVWQTEGVNDRVQLARMNAEVNRRIVTGWMRAGVTIIDPTSTWIQPDVDLANDVTLYPGVFLNGATTIGAGATVGPDVTVTDSEIREEATVTRSEVTLAVVGEGVRVGPFSNIRPGSVLDRDAKVGAFVETKNTHIGTEAAIPHMAYVGDSEVTAGSSIVAGSVLSRECAAPATVSDITSDSQDDTLNPEADQ</sequence>
<gene>
    <name evidence="1" type="primary">glmU</name>
    <name type="ordered locus">PPA0530</name>
</gene>
<evidence type="ECO:0000255" key="1">
    <source>
        <dbReference type="HAMAP-Rule" id="MF_01631"/>
    </source>
</evidence>
<evidence type="ECO:0000305" key="2"/>
<reference key="1">
    <citation type="journal article" date="2004" name="Science">
        <title>The complete genome sequence of Propionibacterium acnes, a commensal of human skin.</title>
        <authorList>
            <person name="Brueggemann H."/>
            <person name="Henne A."/>
            <person name="Hoster F."/>
            <person name="Liesegang H."/>
            <person name="Wiezer A."/>
            <person name="Strittmatter A."/>
            <person name="Hujer S."/>
            <person name="Duerre P."/>
            <person name="Gottschalk G."/>
        </authorList>
    </citation>
    <scope>NUCLEOTIDE SEQUENCE [LARGE SCALE GENOMIC DNA]</scope>
    <source>
        <strain>DSM 16379 / KPA171202</strain>
    </source>
</reference>
<proteinExistence type="inferred from homology"/>
<comment type="function">
    <text evidence="1">Catalyzes the last two sequential reactions in the de novo biosynthetic pathway for UDP-N-acetylglucosamine (UDP-GlcNAc). The C-terminal domain catalyzes the transfer of acetyl group from acetyl coenzyme A to glucosamine-1-phosphate (GlcN-1-P) to produce N-acetylglucosamine-1-phosphate (GlcNAc-1-P), which is converted into UDP-GlcNAc by the transfer of uridine 5-monophosphate (from uridine 5-triphosphate), a reaction catalyzed by the N-terminal domain.</text>
</comment>
<comment type="catalytic activity">
    <reaction evidence="1">
        <text>alpha-D-glucosamine 1-phosphate + acetyl-CoA = N-acetyl-alpha-D-glucosamine 1-phosphate + CoA + H(+)</text>
        <dbReference type="Rhea" id="RHEA:13725"/>
        <dbReference type="ChEBI" id="CHEBI:15378"/>
        <dbReference type="ChEBI" id="CHEBI:57287"/>
        <dbReference type="ChEBI" id="CHEBI:57288"/>
        <dbReference type="ChEBI" id="CHEBI:57776"/>
        <dbReference type="ChEBI" id="CHEBI:58516"/>
        <dbReference type="EC" id="2.3.1.157"/>
    </reaction>
</comment>
<comment type="catalytic activity">
    <reaction evidence="1">
        <text>N-acetyl-alpha-D-glucosamine 1-phosphate + UTP + H(+) = UDP-N-acetyl-alpha-D-glucosamine + diphosphate</text>
        <dbReference type="Rhea" id="RHEA:13509"/>
        <dbReference type="ChEBI" id="CHEBI:15378"/>
        <dbReference type="ChEBI" id="CHEBI:33019"/>
        <dbReference type="ChEBI" id="CHEBI:46398"/>
        <dbReference type="ChEBI" id="CHEBI:57705"/>
        <dbReference type="ChEBI" id="CHEBI:57776"/>
        <dbReference type="EC" id="2.7.7.23"/>
    </reaction>
</comment>
<comment type="cofactor">
    <cofactor evidence="1">
        <name>Mg(2+)</name>
        <dbReference type="ChEBI" id="CHEBI:18420"/>
    </cofactor>
    <text evidence="1">Binds 1 Mg(2+) ion per subunit.</text>
</comment>
<comment type="pathway">
    <text evidence="1">Nucleotide-sugar biosynthesis; UDP-N-acetyl-alpha-D-glucosamine biosynthesis; N-acetyl-alpha-D-glucosamine 1-phosphate from alpha-D-glucosamine 6-phosphate (route II): step 2/2.</text>
</comment>
<comment type="pathway">
    <text evidence="1">Nucleotide-sugar biosynthesis; UDP-N-acetyl-alpha-D-glucosamine biosynthesis; UDP-N-acetyl-alpha-D-glucosamine from N-acetyl-alpha-D-glucosamine 1-phosphate: step 1/1.</text>
</comment>
<comment type="pathway">
    <text evidence="1">Bacterial outer membrane biogenesis; LPS lipid A biosynthesis.</text>
</comment>
<comment type="subunit">
    <text evidence="1">Homotrimer.</text>
</comment>
<comment type="subcellular location">
    <subcellularLocation>
        <location evidence="1">Cytoplasm</location>
    </subcellularLocation>
</comment>
<comment type="similarity">
    <text evidence="1">In the N-terminal section; belongs to the N-acetylglucosamine-1-phosphate uridyltransferase family.</text>
</comment>
<comment type="similarity">
    <text evidence="1">In the C-terminal section; belongs to the transferase hexapeptide repeat family.</text>
</comment>
<comment type="sequence caution" evidence="2">
    <conflict type="erroneous initiation">
        <sequence resource="EMBL-CDS" id="AAT82283"/>
    </conflict>
</comment>